<comment type="function">
    <text evidence="1">Involved in cell division and chromosome segregation.</text>
</comment>
<comment type="similarity">
    <text evidence="1">Belongs to the WhiA family.</text>
</comment>
<proteinExistence type="inferred from homology"/>
<protein>
    <recommendedName>
        <fullName evidence="1">Probable cell division protein WhiA</fullName>
    </recommendedName>
</protein>
<dbReference type="EMBL" id="CP000667">
    <property type="protein sequence ID" value="ABP55536.1"/>
    <property type="molecule type" value="Genomic_DNA"/>
</dbReference>
<dbReference type="RefSeq" id="WP_012014313.1">
    <property type="nucleotide sequence ID" value="NC_009380.1"/>
</dbReference>
<dbReference type="SMR" id="A4XDR5"/>
<dbReference type="STRING" id="369723.Strop_3099"/>
<dbReference type="KEGG" id="stp:Strop_3099"/>
<dbReference type="PATRIC" id="fig|369723.5.peg.3189"/>
<dbReference type="eggNOG" id="COG1481">
    <property type="taxonomic scope" value="Bacteria"/>
</dbReference>
<dbReference type="HOGENOM" id="CLU_053282_0_0_11"/>
<dbReference type="Proteomes" id="UP000000235">
    <property type="component" value="Chromosome"/>
</dbReference>
<dbReference type="GO" id="GO:0003677">
    <property type="term" value="F:DNA binding"/>
    <property type="evidence" value="ECO:0007669"/>
    <property type="project" value="UniProtKB-UniRule"/>
</dbReference>
<dbReference type="GO" id="GO:0051301">
    <property type="term" value="P:cell division"/>
    <property type="evidence" value="ECO:0007669"/>
    <property type="project" value="UniProtKB-UniRule"/>
</dbReference>
<dbReference type="GO" id="GO:0043937">
    <property type="term" value="P:regulation of sporulation"/>
    <property type="evidence" value="ECO:0007669"/>
    <property type="project" value="InterPro"/>
</dbReference>
<dbReference type="FunFam" id="3.10.28.10:FF:000001">
    <property type="entry name" value="Probable cell division protein WhiA"/>
    <property type="match status" value="1"/>
</dbReference>
<dbReference type="Gene3D" id="3.10.28.10">
    <property type="entry name" value="Homing endonucleases"/>
    <property type="match status" value="1"/>
</dbReference>
<dbReference type="HAMAP" id="MF_01420">
    <property type="entry name" value="HTH_type_WhiA"/>
    <property type="match status" value="1"/>
</dbReference>
<dbReference type="InterPro" id="IPR027434">
    <property type="entry name" value="Homing_endonucl"/>
</dbReference>
<dbReference type="InterPro" id="IPR018478">
    <property type="entry name" value="Sporu_reg_WhiA_N_dom"/>
</dbReference>
<dbReference type="InterPro" id="IPR003802">
    <property type="entry name" value="Sporulation_regulator_WhiA"/>
</dbReference>
<dbReference type="InterPro" id="IPR023054">
    <property type="entry name" value="Sporulation_regulator_WhiA_C"/>
</dbReference>
<dbReference type="InterPro" id="IPR039518">
    <property type="entry name" value="WhiA_LAGLIDADG_dom"/>
</dbReference>
<dbReference type="NCBIfam" id="TIGR00647">
    <property type="entry name" value="DNA_bind_WhiA"/>
    <property type="match status" value="1"/>
</dbReference>
<dbReference type="PANTHER" id="PTHR37307">
    <property type="entry name" value="CELL DIVISION PROTEIN WHIA-RELATED"/>
    <property type="match status" value="1"/>
</dbReference>
<dbReference type="PANTHER" id="PTHR37307:SF1">
    <property type="entry name" value="CELL DIVISION PROTEIN WHIA-RELATED"/>
    <property type="match status" value="1"/>
</dbReference>
<dbReference type="Pfam" id="PF02650">
    <property type="entry name" value="HTH_WhiA"/>
    <property type="match status" value="1"/>
</dbReference>
<dbReference type="Pfam" id="PF14527">
    <property type="entry name" value="LAGLIDADG_WhiA"/>
    <property type="match status" value="1"/>
</dbReference>
<dbReference type="Pfam" id="PF10298">
    <property type="entry name" value="WhiA_N"/>
    <property type="match status" value="1"/>
</dbReference>
<sequence length="326" mass="34915">MAMTAAVKDELSRVDVPKPCCRRAEMAALLRFAGGLHIVSGRVVVEAELDTGAVARRLRREIAEVYGYPSEIHVLASGGLRKGSHFIVRVVKDGEFLARQTGLLDVRGRPVRGLPPHVVAANVCCAVSAWRGAFMAHGSLTEPGRSSAMEITCPGPESALALVGAARRIGIAAKNREVRGVDRVVVKDGDAIAALLTRIGAHASVLAWEERRVRREVRATANRLANFDDANLRRSARAAVAAAARVTRALEILADDAPHHLTSAGRLRLEHRQASLEELGALADPPLTKDAIAGRIRRLLALADKRARDLGIPDTEAAVTPDMLVV</sequence>
<keyword id="KW-0131">Cell cycle</keyword>
<keyword id="KW-0132">Cell division</keyword>
<keyword id="KW-0238">DNA-binding</keyword>
<keyword id="KW-1185">Reference proteome</keyword>
<reference key="1">
    <citation type="journal article" date="2007" name="Proc. Natl. Acad. Sci. U.S.A.">
        <title>Genome sequencing reveals complex secondary metabolome in the marine actinomycete Salinispora tropica.</title>
        <authorList>
            <person name="Udwary D.W."/>
            <person name="Zeigler L."/>
            <person name="Asolkar R.N."/>
            <person name="Singan V."/>
            <person name="Lapidus A."/>
            <person name="Fenical W."/>
            <person name="Jensen P.R."/>
            <person name="Moore B.S."/>
        </authorList>
    </citation>
    <scope>NUCLEOTIDE SEQUENCE [LARGE SCALE GENOMIC DNA]</scope>
    <source>
        <strain>ATCC BAA-916 / DSM 44818 / JCM 13857 / NBRC 105044 / CNB-440</strain>
    </source>
</reference>
<name>WHIA_SALTO</name>
<feature type="chain" id="PRO_0000376550" description="Probable cell division protein WhiA">
    <location>
        <begin position="1"/>
        <end position="326"/>
    </location>
</feature>
<feature type="DNA-binding region" description="H-T-H motif" evidence="1">
    <location>
        <begin position="275"/>
        <end position="308"/>
    </location>
</feature>
<evidence type="ECO:0000255" key="1">
    <source>
        <dbReference type="HAMAP-Rule" id="MF_01420"/>
    </source>
</evidence>
<organism>
    <name type="scientific">Salinispora tropica (strain ATCC BAA-916 / DSM 44818 / JCM 13857 / NBRC 105044 / CNB-440)</name>
    <dbReference type="NCBI Taxonomy" id="369723"/>
    <lineage>
        <taxon>Bacteria</taxon>
        <taxon>Bacillati</taxon>
        <taxon>Actinomycetota</taxon>
        <taxon>Actinomycetes</taxon>
        <taxon>Micromonosporales</taxon>
        <taxon>Micromonosporaceae</taxon>
        <taxon>Salinispora</taxon>
    </lineage>
</organism>
<gene>
    <name evidence="1" type="primary">whiA</name>
    <name type="ordered locus">Strop_3099</name>
</gene>
<accession>A4XDR5</accession>